<evidence type="ECO:0000255" key="1"/>
<evidence type="ECO:0000269" key="2">
    <source>
    </source>
</evidence>
<evidence type="ECO:0000269" key="3">
    <source>
    </source>
</evidence>
<evidence type="ECO:0000269" key="4">
    <source>
    </source>
</evidence>
<evidence type="ECO:0000305" key="5"/>
<keyword id="KW-0050">Antiport</keyword>
<keyword id="KW-0406">Ion transport</keyword>
<keyword id="KW-0472">Membrane</keyword>
<keyword id="KW-1185">Reference proteome</keyword>
<keyword id="KW-0915">Sodium</keyword>
<keyword id="KW-0739">Sodium transport</keyword>
<keyword id="KW-0793">Thylakoid</keyword>
<keyword id="KW-0812">Transmembrane</keyword>
<keyword id="KW-1133">Transmembrane helix</keyword>
<keyword id="KW-0813">Transport</keyword>
<proteinExistence type="evidence at protein level"/>
<dbReference type="EMBL" id="BA000022">
    <property type="protein sequence ID" value="BAA10332.1"/>
    <property type="molecule type" value="Genomic_DNA"/>
</dbReference>
<dbReference type="PIR" id="S74414">
    <property type="entry name" value="S74414"/>
</dbReference>
<dbReference type="SMR" id="Q55190"/>
<dbReference type="FunCoup" id="Q55190">
    <property type="interactions" value="304"/>
</dbReference>
<dbReference type="IntAct" id="Q55190">
    <property type="interactions" value="1"/>
</dbReference>
<dbReference type="STRING" id="1148.gene:10499832"/>
<dbReference type="TCDB" id="2.A.37.2.4">
    <property type="family name" value="the monovalent cation:proton antiporter-2 (cpa2) family"/>
</dbReference>
<dbReference type="PaxDb" id="1148-1001188"/>
<dbReference type="EnsemblBacteria" id="BAA10332">
    <property type="protein sequence ID" value="BAA10332"/>
    <property type="gene ID" value="BAA10332"/>
</dbReference>
<dbReference type="KEGG" id="syn:sll0689"/>
<dbReference type="eggNOG" id="COG0475">
    <property type="taxonomic scope" value="Bacteria"/>
</dbReference>
<dbReference type="InParanoid" id="Q55190"/>
<dbReference type="PhylomeDB" id="Q55190"/>
<dbReference type="SABIO-RK" id="Q55190"/>
<dbReference type="Proteomes" id="UP000001425">
    <property type="component" value="Chromosome"/>
</dbReference>
<dbReference type="GO" id="GO:0031676">
    <property type="term" value="C:plasma membrane-derived thylakoid membrane"/>
    <property type="evidence" value="ECO:0007669"/>
    <property type="project" value="UniProtKB-SubCell"/>
</dbReference>
<dbReference type="GO" id="GO:0015297">
    <property type="term" value="F:antiporter activity"/>
    <property type="evidence" value="ECO:0007669"/>
    <property type="project" value="UniProtKB-KW"/>
</dbReference>
<dbReference type="GO" id="GO:1902600">
    <property type="term" value="P:proton transmembrane transport"/>
    <property type="evidence" value="ECO:0007669"/>
    <property type="project" value="InterPro"/>
</dbReference>
<dbReference type="GO" id="GO:0006814">
    <property type="term" value="P:sodium ion transport"/>
    <property type="evidence" value="ECO:0007669"/>
    <property type="project" value="UniProtKB-KW"/>
</dbReference>
<dbReference type="Gene3D" id="1.20.1530.20">
    <property type="match status" value="1"/>
</dbReference>
<dbReference type="InterPro" id="IPR006153">
    <property type="entry name" value="Cation/H_exchanger_TM"/>
</dbReference>
<dbReference type="InterPro" id="IPR038770">
    <property type="entry name" value="Na+/solute_symporter_sf"/>
</dbReference>
<dbReference type="PANTHER" id="PTHR43562">
    <property type="entry name" value="NAPA-TYPE SODIUM/HYDROGEN ANTIPORTER"/>
    <property type="match status" value="1"/>
</dbReference>
<dbReference type="PANTHER" id="PTHR43562:SF3">
    <property type="entry name" value="SODIUM ION_PROTON EXCHANGER (EUROFUNG)"/>
    <property type="match status" value="1"/>
</dbReference>
<dbReference type="Pfam" id="PF00999">
    <property type="entry name" value="Na_H_Exchanger"/>
    <property type="match status" value="1"/>
</dbReference>
<accession>Q55190</accession>
<reference key="1">
    <citation type="journal article" date="1996" name="DNA Res.">
        <title>Sequence analysis of the genome of the unicellular cyanobacterium Synechocystis sp. strain PCC6803. II. Sequence determination of the entire genome and assignment of potential protein-coding regions.</title>
        <authorList>
            <person name="Kaneko T."/>
            <person name="Sato S."/>
            <person name="Kotani H."/>
            <person name="Tanaka A."/>
            <person name="Asamizu E."/>
            <person name="Nakamura Y."/>
            <person name="Miyajima N."/>
            <person name="Hirosawa M."/>
            <person name="Sugiura M."/>
            <person name="Sasamoto S."/>
            <person name="Kimura T."/>
            <person name="Hosouchi T."/>
            <person name="Matsuno A."/>
            <person name="Muraki A."/>
            <person name="Nakazaki N."/>
            <person name="Naruo K."/>
            <person name="Okumura S."/>
            <person name="Shimpo S."/>
            <person name="Takeuchi C."/>
            <person name="Wada T."/>
            <person name="Watanabe A."/>
            <person name="Yamada M."/>
            <person name="Yasuda M."/>
            <person name="Tabata S."/>
        </authorList>
    </citation>
    <scope>NUCLEOTIDE SEQUENCE [LARGE SCALE GENOMIC DNA]</scope>
    <source>
        <strain>ATCC 27184 / PCC 6803 / Kazusa</strain>
    </source>
</reference>
<reference key="2">
    <citation type="journal article" date="2001" name="J. Bacteriol.">
        <title>Functional expression in Escherichia coli of low-affinity and high-affinity Na(+)(Li(+))/H(+) antiporters of Synechocystis.</title>
        <authorList>
            <person name="Inaba M."/>
            <person name="Sakamoto A."/>
            <person name="Murata N."/>
        </authorList>
    </citation>
    <scope>FUNCTION</scope>
    <scope>BIOPHYSICOCHEMICAL PROPERTIES</scope>
    <scope>GENE NAME</scope>
    <source>
        <strain>ATCC 27184 / PCC 6803 / N-1</strain>
    </source>
</reference>
<reference key="3">
    <citation type="journal article" date="2002" name="Biochemistry (Mosc.)">
        <title>Functional analysis of the Na+/H+ antiporter encoding genes of the cyanobacterium Synechocystis PCC 6803.</title>
        <authorList>
            <person name="Elanskaya I.V."/>
            <person name="Karandashova I.V."/>
            <person name="Bogachev A.V."/>
            <person name="Hagemann M."/>
        </authorList>
    </citation>
    <scope>FUNCTION</scope>
    <source>
        <strain>ATCC 27184 / PCC 6803 / N-1</strain>
    </source>
</reference>
<reference key="4">
    <citation type="journal article" date="2009" name="J. Biol. Chem.">
        <title>Identification and characterization of the Na+/H+ antiporter Nhas3 from the thylakoid membrane of Synechocystis sp. PCC 6803.</title>
        <authorList>
            <person name="Tsunekawa K."/>
            <person name="Shijuku T."/>
            <person name="Hayashimoto M."/>
            <person name="Kojima Y."/>
            <person name="Onai K."/>
            <person name="Morishita M."/>
            <person name="Ishiura M."/>
            <person name="Kuroda T."/>
            <person name="Nakamura T."/>
            <person name="Kobayashi H."/>
            <person name="Sato M."/>
            <person name="Toyooka K."/>
            <person name="Matsuoka K."/>
            <person name="Omata T."/>
            <person name="Uozumi N."/>
        </authorList>
    </citation>
    <scope>FUNCTION</scope>
    <scope>BIOPHYSICOCHEMICAL PROPERTIES</scope>
    <scope>SUBCELLULAR LOCATION</scope>
    <scope>INDUCTION</scope>
    <scope>MUTAGENESIS OF ASP-99; GLU-114; GLU-121; ASP-217; ASP-218; GLU-359 AND GLU-402</scope>
    <source>
        <strain>ATCC 27184 / PCC 6803 / N-1</strain>
    </source>
</reference>
<gene>
    <name type="primary">nhaS3</name>
    <name type="ordered locus">sll0689</name>
</gene>
<organism>
    <name type="scientific">Synechocystis sp. (strain ATCC 27184 / PCC 6803 / Kazusa)</name>
    <dbReference type="NCBI Taxonomy" id="1111708"/>
    <lineage>
        <taxon>Bacteria</taxon>
        <taxon>Bacillati</taxon>
        <taxon>Cyanobacteriota</taxon>
        <taxon>Cyanophyceae</taxon>
        <taxon>Synechococcales</taxon>
        <taxon>Merismopediaceae</taxon>
        <taxon>Synechocystis</taxon>
    </lineage>
</organism>
<sequence length="461" mass="47872">MFMNPLLPPLWPMIATAVETETEIAPLVLAGVLLSLVVIYFASKLGGEVCLRLNLPPVLGELVGGVLVGVSALKLLLFPEGGLAPEDSLVIQLLMGSADLSPEAAQSVFSAQSEVISVISELGVIILLFEIGLESNLKELIRVGPQAAIVAVVGVVTPFSLGTIGLMTIFGVAAIPAIFAGAALTATSIGITAKVLAEINRLSSNEGQIIIGAAVLDDILGIIVLAVVGSLVKTGEIQISNIIYLILSATGFVVGSILIGRLLSPFYVSLVNRMKTRGQLLLVSICVAFVLSYIAQIVQLEAILGSFAAGLILAETEKREDLEEQILPLADFFVPVFFVCVGAKTDVSVLNPAVPANREGLIIAAFLILVAIVGKVVTGFTLFGKSELNKLAIGVGMIPRGEVGLVFAGVGAASGALDPATDAAIIVMVIVTTFVAPPWLRAVFEGAKKEEAPEKPVPTPD</sequence>
<comment type="function">
    <text evidence="2 3 4">Na(+)/H(+) antiporter that transports sodium from the cytoplasm into the thylakoid lumen in exchange for protons. Contributes to sodium homeostasis and tolerance. Also has Li(+)/H(+) antiport activity under K(+)-free conditions, but not under K(+)-rich conditions.</text>
</comment>
<comment type="biophysicochemical properties">
    <kinetics>
        <KM evidence="2 4">0.7 mM for Na(+) (under K(+)-free conditions)</KM>
        <KM evidence="2 4">0.01 mM for Li(+) (under K(+)-free conditions)</KM>
    </kinetics>
    <phDependence>
        <text evidence="2 4">Activity is pH-independent.</text>
    </phDependence>
</comment>
<comment type="subcellular location">
    <subcellularLocation>
        <location evidence="4">Cellular thylakoid membrane</location>
        <topology evidence="4">Multi-pass membrane protein</topology>
    </subcellularLocation>
</comment>
<comment type="induction">
    <text evidence="4">Induced in response to increased CO(2) concentrations. Expression is under circadian control.</text>
</comment>
<comment type="similarity">
    <text evidence="5">Belongs to the monovalent cation:proton antiporter 2 (CPA2) transporter (TC 2.A.37) family.</text>
</comment>
<feature type="chain" id="PRO_0000423929" description="High-affinity Na(+)/H(+) antiporter NhaS3">
    <location>
        <begin position="1"/>
        <end position="461"/>
    </location>
</feature>
<feature type="transmembrane region" description="Helical" evidence="1">
    <location>
        <begin position="22"/>
        <end position="42"/>
    </location>
</feature>
<feature type="transmembrane region" description="Helical" evidence="1">
    <location>
        <begin position="58"/>
        <end position="78"/>
    </location>
</feature>
<feature type="transmembrane region" description="Helical" evidence="1">
    <location>
        <begin position="113"/>
        <end position="133"/>
    </location>
</feature>
<feature type="transmembrane region" description="Helical" evidence="1">
    <location>
        <begin position="148"/>
        <end position="170"/>
    </location>
</feature>
<feature type="transmembrane region" description="Helical" evidence="1">
    <location>
        <begin position="175"/>
        <end position="197"/>
    </location>
</feature>
<feature type="transmembrane region" description="Helical" evidence="1">
    <location>
        <begin position="209"/>
        <end position="229"/>
    </location>
</feature>
<feature type="transmembrane region" description="Helical" evidence="1">
    <location>
        <begin position="239"/>
        <end position="259"/>
    </location>
</feature>
<feature type="transmembrane region" description="Helical" evidence="1">
    <location>
        <begin position="280"/>
        <end position="300"/>
    </location>
</feature>
<feature type="transmembrane region" description="Helical" evidence="1">
    <location>
        <begin position="360"/>
        <end position="380"/>
    </location>
</feature>
<feature type="transmembrane region" description="Helical" evidence="1">
    <location>
        <begin position="391"/>
        <end position="411"/>
    </location>
</feature>
<feature type="transmembrane region" description="Helical" evidence="1">
    <location>
        <begin position="424"/>
        <end position="444"/>
    </location>
</feature>
<feature type="mutagenesis site" description="Lack of activity." evidence="4">
    <original>D</original>
    <variation>A</variation>
    <location>
        <position position="99"/>
    </location>
</feature>
<feature type="mutagenesis site" description="Strong decrease in activity." evidence="4">
    <original>E</original>
    <variation>A</variation>
    <location>
        <position position="114"/>
    </location>
</feature>
<feature type="mutagenesis site" description="Lack of activity." evidence="4">
    <original>E</original>
    <variation>Q</variation>
    <location>
        <position position="121"/>
    </location>
</feature>
<feature type="mutagenesis site" description="Lack of activity." evidence="4">
    <original>D</original>
    <variation>A</variation>
    <variation>N</variation>
    <location>
        <position position="217"/>
    </location>
</feature>
<feature type="mutagenesis site" description="Lack of activity." evidence="4">
    <original>D</original>
    <variation>A</variation>
    <variation>N</variation>
    <location>
        <position position="218"/>
    </location>
</feature>
<feature type="mutagenesis site" description="Strong decrease in activity." evidence="4">
    <original>E</original>
    <variation>Q</variation>
    <location>
        <position position="359"/>
    </location>
</feature>
<feature type="mutagenesis site" description="Lack of activity." evidence="4">
    <original>E</original>
    <variation>A</variation>
    <variation>Q</variation>
    <location>
        <position position="402"/>
    </location>
</feature>
<protein>
    <recommendedName>
        <fullName>High-affinity Na(+)/H(+) antiporter NhaS3</fullName>
    </recommendedName>
    <alternativeName>
        <fullName>Sodium/proton antiporter NhaS3</fullName>
    </alternativeName>
</protein>
<name>NHAS3_SYNY3</name>